<dbReference type="EC" id="1.14.-.-"/>
<dbReference type="EMBL" id="AL162972">
    <property type="protein sequence ID" value="CAB86008.1"/>
    <property type="molecule type" value="Genomic_DNA"/>
</dbReference>
<dbReference type="EMBL" id="CP002688">
    <property type="protein sequence ID" value="AED90769.1"/>
    <property type="molecule type" value="Genomic_DNA"/>
</dbReference>
<dbReference type="EMBL" id="AY088562">
    <property type="protein sequence ID" value="AAM66094.1"/>
    <property type="molecule type" value="mRNA"/>
</dbReference>
<dbReference type="PIR" id="T48462">
    <property type="entry name" value="T48462"/>
</dbReference>
<dbReference type="RefSeq" id="NP_196086.1">
    <property type="nucleotide sequence ID" value="NM_120548.3"/>
</dbReference>
<dbReference type="SMR" id="Q9LZ31"/>
<dbReference type="FunCoup" id="Q9LZ31">
    <property type="interactions" value="147"/>
</dbReference>
<dbReference type="STRING" id="3702.Q9LZ31"/>
<dbReference type="PaxDb" id="3702-AT5G04660.1"/>
<dbReference type="ProteomicsDB" id="239201"/>
<dbReference type="EnsemblPlants" id="AT5G04660.1">
    <property type="protein sequence ID" value="AT5G04660.1"/>
    <property type="gene ID" value="AT5G04660"/>
</dbReference>
<dbReference type="GeneID" id="830343"/>
<dbReference type="Gramene" id="AT5G04660.1">
    <property type="protein sequence ID" value="AT5G04660.1"/>
    <property type="gene ID" value="AT5G04660"/>
</dbReference>
<dbReference type="KEGG" id="ath:AT5G04660"/>
<dbReference type="Araport" id="AT5G04660"/>
<dbReference type="TAIR" id="AT5G04660">
    <property type="gene designation" value="CYP77A4"/>
</dbReference>
<dbReference type="eggNOG" id="KOG0156">
    <property type="taxonomic scope" value="Eukaryota"/>
</dbReference>
<dbReference type="HOGENOM" id="CLU_001570_4_0_1"/>
<dbReference type="InParanoid" id="Q9LZ31"/>
<dbReference type="OMA" id="NTFIMAM"/>
<dbReference type="PhylomeDB" id="Q9LZ31"/>
<dbReference type="BioCyc" id="ARA:MONOMER-16208"/>
<dbReference type="BioCyc" id="MetaCyc:AT5G04660-MONOMER"/>
<dbReference type="PRO" id="PR:Q9LZ31"/>
<dbReference type="Proteomes" id="UP000006548">
    <property type="component" value="Chromosome 5"/>
</dbReference>
<dbReference type="ExpressionAtlas" id="Q9LZ31">
    <property type="expression patterns" value="baseline and differential"/>
</dbReference>
<dbReference type="GO" id="GO:0016020">
    <property type="term" value="C:membrane"/>
    <property type="evidence" value="ECO:0007669"/>
    <property type="project" value="UniProtKB-SubCell"/>
</dbReference>
<dbReference type="GO" id="GO:0020037">
    <property type="term" value="F:heme binding"/>
    <property type="evidence" value="ECO:0007669"/>
    <property type="project" value="InterPro"/>
</dbReference>
<dbReference type="GO" id="GO:0005506">
    <property type="term" value="F:iron ion binding"/>
    <property type="evidence" value="ECO:0007669"/>
    <property type="project" value="InterPro"/>
</dbReference>
<dbReference type="GO" id="GO:0004497">
    <property type="term" value="F:monooxygenase activity"/>
    <property type="evidence" value="ECO:0007669"/>
    <property type="project" value="UniProtKB-KW"/>
</dbReference>
<dbReference type="GO" id="GO:0016705">
    <property type="term" value="F:oxidoreductase activity, acting on paired donors, with incorporation or reduction of molecular oxygen"/>
    <property type="evidence" value="ECO:0007669"/>
    <property type="project" value="InterPro"/>
</dbReference>
<dbReference type="GO" id="GO:0019395">
    <property type="term" value="P:fatty acid oxidation"/>
    <property type="evidence" value="ECO:0000314"/>
    <property type="project" value="UniProtKB"/>
</dbReference>
<dbReference type="CDD" id="cd11075">
    <property type="entry name" value="CYP77_89"/>
    <property type="match status" value="1"/>
</dbReference>
<dbReference type="FunFam" id="1.10.630.10:FF:000012">
    <property type="entry name" value="Cytochrome P450 family protein"/>
    <property type="match status" value="1"/>
</dbReference>
<dbReference type="Gene3D" id="1.10.630.10">
    <property type="entry name" value="Cytochrome P450"/>
    <property type="match status" value="1"/>
</dbReference>
<dbReference type="InterPro" id="IPR001128">
    <property type="entry name" value="Cyt_P450"/>
</dbReference>
<dbReference type="InterPro" id="IPR017972">
    <property type="entry name" value="Cyt_P450_CS"/>
</dbReference>
<dbReference type="InterPro" id="IPR002401">
    <property type="entry name" value="Cyt_P450_E_grp-I"/>
</dbReference>
<dbReference type="InterPro" id="IPR036396">
    <property type="entry name" value="Cyt_P450_sf"/>
</dbReference>
<dbReference type="PANTHER" id="PTHR47944:SF19">
    <property type="entry name" value="CYTOCHROME P450 77A4"/>
    <property type="match status" value="1"/>
</dbReference>
<dbReference type="PANTHER" id="PTHR47944">
    <property type="entry name" value="CYTOCHROME P450 98A9"/>
    <property type="match status" value="1"/>
</dbReference>
<dbReference type="Pfam" id="PF00067">
    <property type="entry name" value="p450"/>
    <property type="match status" value="1"/>
</dbReference>
<dbReference type="PRINTS" id="PR00463">
    <property type="entry name" value="EP450I"/>
</dbReference>
<dbReference type="PRINTS" id="PR00385">
    <property type="entry name" value="P450"/>
</dbReference>
<dbReference type="SUPFAM" id="SSF48264">
    <property type="entry name" value="Cytochrome P450"/>
    <property type="match status" value="1"/>
</dbReference>
<dbReference type="PROSITE" id="PS00086">
    <property type="entry name" value="CYTOCHROME_P450"/>
    <property type="match status" value="1"/>
</dbReference>
<reference key="1">
    <citation type="journal article" date="2000" name="Nature">
        <title>Sequence and analysis of chromosome 5 of the plant Arabidopsis thaliana.</title>
        <authorList>
            <person name="Tabata S."/>
            <person name="Kaneko T."/>
            <person name="Nakamura Y."/>
            <person name="Kotani H."/>
            <person name="Kato T."/>
            <person name="Asamizu E."/>
            <person name="Miyajima N."/>
            <person name="Sasamoto S."/>
            <person name="Kimura T."/>
            <person name="Hosouchi T."/>
            <person name="Kawashima K."/>
            <person name="Kohara M."/>
            <person name="Matsumoto M."/>
            <person name="Matsuno A."/>
            <person name="Muraki A."/>
            <person name="Nakayama S."/>
            <person name="Nakazaki N."/>
            <person name="Naruo K."/>
            <person name="Okumura S."/>
            <person name="Shinpo S."/>
            <person name="Takeuchi C."/>
            <person name="Wada T."/>
            <person name="Watanabe A."/>
            <person name="Yamada M."/>
            <person name="Yasuda M."/>
            <person name="Sato S."/>
            <person name="de la Bastide M."/>
            <person name="Huang E."/>
            <person name="Spiegel L."/>
            <person name="Gnoj L."/>
            <person name="O'Shaughnessy A."/>
            <person name="Preston R."/>
            <person name="Habermann K."/>
            <person name="Murray J."/>
            <person name="Johnson D."/>
            <person name="Rohlfing T."/>
            <person name="Nelson J."/>
            <person name="Stoneking T."/>
            <person name="Pepin K."/>
            <person name="Spieth J."/>
            <person name="Sekhon M."/>
            <person name="Armstrong J."/>
            <person name="Becker M."/>
            <person name="Belter E."/>
            <person name="Cordum H."/>
            <person name="Cordes M."/>
            <person name="Courtney L."/>
            <person name="Courtney W."/>
            <person name="Dante M."/>
            <person name="Du H."/>
            <person name="Edwards J."/>
            <person name="Fryman J."/>
            <person name="Haakensen B."/>
            <person name="Lamar E."/>
            <person name="Latreille P."/>
            <person name="Leonard S."/>
            <person name="Meyer R."/>
            <person name="Mulvaney E."/>
            <person name="Ozersky P."/>
            <person name="Riley A."/>
            <person name="Strowmatt C."/>
            <person name="Wagner-McPherson C."/>
            <person name="Wollam A."/>
            <person name="Yoakum M."/>
            <person name="Bell M."/>
            <person name="Dedhia N."/>
            <person name="Parnell L."/>
            <person name="Shah R."/>
            <person name="Rodriguez M."/>
            <person name="Hoon See L."/>
            <person name="Vil D."/>
            <person name="Baker J."/>
            <person name="Kirchoff K."/>
            <person name="Toth K."/>
            <person name="King L."/>
            <person name="Bahret A."/>
            <person name="Miller B."/>
            <person name="Marra M.A."/>
            <person name="Martienssen R."/>
            <person name="McCombie W.R."/>
            <person name="Wilson R.K."/>
            <person name="Murphy G."/>
            <person name="Bancroft I."/>
            <person name="Volckaert G."/>
            <person name="Wambutt R."/>
            <person name="Duesterhoeft A."/>
            <person name="Stiekema W."/>
            <person name="Pohl T."/>
            <person name="Entian K.-D."/>
            <person name="Terryn N."/>
            <person name="Hartley N."/>
            <person name="Bent E."/>
            <person name="Johnson S."/>
            <person name="Langham S.-A."/>
            <person name="McCullagh B."/>
            <person name="Robben J."/>
            <person name="Grymonprez B."/>
            <person name="Zimmermann W."/>
            <person name="Ramsperger U."/>
            <person name="Wedler H."/>
            <person name="Balke K."/>
            <person name="Wedler E."/>
            <person name="Peters S."/>
            <person name="van Staveren M."/>
            <person name="Dirkse W."/>
            <person name="Mooijman P."/>
            <person name="Klein Lankhorst R."/>
            <person name="Weitzenegger T."/>
            <person name="Bothe G."/>
            <person name="Rose M."/>
            <person name="Hauf J."/>
            <person name="Berneiser S."/>
            <person name="Hempel S."/>
            <person name="Feldpausch M."/>
            <person name="Lamberth S."/>
            <person name="Villarroel R."/>
            <person name="Gielen J."/>
            <person name="Ardiles W."/>
            <person name="Bents O."/>
            <person name="Lemcke K."/>
            <person name="Kolesov G."/>
            <person name="Mayer K.F.X."/>
            <person name="Rudd S."/>
            <person name="Schoof H."/>
            <person name="Schueller C."/>
            <person name="Zaccaria P."/>
            <person name="Mewes H.-W."/>
            <person name="Bevan M."/>
            <person name="Fransz P.F."/>
        </authorList>
    </citation>
    <scope>NUCLEOTIDE SEQUENCE [LARGE SCALE GENOMIC DNA]</scope>
    <source>
        <strain>cv. Columbia</strain>
    </source>
</reference>
<reference key="2">
    <citation type="journal article" date="2017" name="Plant J.">
        <title>Araport11: a complete reannotation of the Arabidopsis thaliana reference genome.</title>
        <authorList>
            <person name="Cheng C.Y."/>
            <person name="Krishnakumar V."/>
            <person name="Chan A.P."/>
            <person name="Thibaud-Nissen F."/>
            <person name="Schobel S."/>
            <person name="Town C.D."/>
        </authorList>
    </citation>
    <scope>GENOME REANNOTATION</scope>
    <source>
        <strain>cv. Columbia</strain>
    </source>
</reference>
<reference key="3">
    <citation type="submission" date="2002-03" db="EMBL/GenBank/DDBJ databases">
        <title>Full-length cDNA from Arabidopsis thaliana.</title>
        <authorList>
            <person name="Brover V.V."/>
            <person name="Troukhan M.E."/>
            <person name="Alexandrov N.A."/>
            <person name="Lu Y.-P."/>
            <person name="Flavell R.B."/>
            <person name="Feldmann K.A."/>
        </authorList>
    </citation>
    <scope>NUCLEOTIDE SEQUENCE [LARGE SCALE MRNA]</scope>
</reference>
<reference key="4">
    <citation type="journal article" date="2009" name="FEBS J.">
        <title>Arabidopsis thaliana CYP77A4 is the first cytochrome P450 able to catalyze the epoxidation of free fatty acids in plants.</title>
        <authorList>
            <person name="Sauveplane V."/>
            <person name="Kandel S."/>
            <person name="Kastner P.E."/>
            <person name="Ehlting J."/>
            <person name="Compagnon V."/>
            <person name="Werck-Reichhart D."/>
            <person name="Pinot F."/>
        </authorList>
    </citation>
    <scope>FUNCTION</scope>
</reference>
<name>C77A4_ARATH</name>
<comment type="function">
    <text evidence="3">Catalyzes the epoxidation of physiological unsaturated fatty acids in vitro. Can use laurate, oleate, linoleate, linolenate and vernolate as substrate.</text>
</comment>
<comment type="cofactor">
    <cofactor evidence="1">
        <name>heme</name>
        <dbReference type="ChEBI" id="CHEBI:30413"/>
    </cofactor>
</comment>
<comment type="subcellular location">
    <subcellularLocation>
        <location evidence="4">Membrane</location>
        <topology evidence="4">Single-pass membrane protein</topology>
    </subcellularLocation>
</comment>
<comment type="similarity">
    <text evidence="4">Belongs to the cytochrome P450 family.</text>
</comment>
<feature type="chain" id="PRO_0000411196" description="Cytochrome P450 77A4">
    <location>
        <begin position="1"/>
        <end position="512"/>
    </location>
</feature>
<feature type="transmembrane region" description="Helical" evidence="2">
    <location>
        <begin position="9"/>
        <end position="29"/>
    </location>
</feature>
<feature type="binding site" description="axial binding residue" evidence="1">
    <location>
        <position position="456"/>
    </location>
    <ligand>
        <name>heme</name>
        <dbReference type="ChEBI" id="CHEBI:30413"/>
    </ligand>
    <ligandPart>
        <name>Fe</name>
        <dbReference type="ChEBI" id="CHEBI:18248"/>
    </ligandPart>
</feature>
<feature type="sequence conflict" description="In Ref. 3; AAM66094." evidence="4" ref="3">
    <original>F</original>
    <variation>S</variation>
    <location>
        <position position="2"/>
    </location>
</feature>
<feature type="sequence conflict" description="In Ref. 3; AAM66094." evidence="4" ref="3">
    <original>S</original>
    <variation>T</variation>
    <location>
        <position position="8"/>
    </location>
</feature>
<feature type="sequence conflict" description="In Ref. 3; AAM66094." evidence="4" ref="3">
    <original>E</original>
    <variation>D</variation>
    <location>
        <position position="216"/>
    </location>
</feature>
<feature type="sequence conflict" description="In Ref. 3; AAM66094." evidence="4" ref="3">
    <original>I</original>
    <variation>V</variation>
    <location>
        <position position="464"/>
    </location>
</feature>
<accession>Q9LZ31</accession>
<accession>Q8L9A1</accession>
<proteinExistence type="evidence at transcript level"/>
<keyword id="KW-0349">Heme</keyword>
<keyword id="KW-0408">Iron</keyword>
<keyword id="KW-0472">Membrane</keyword>
<keyword id="KW-0479">Metal-binding</keyword>
<keyword id="KW-0503">Monooxygenase</keyword>
<keyword id="KW-0521">NADP</keyword>
<keyword id="KW-0560">Oxidoreductase</keyword>
<keyword id="KW-1185">Reference proteome</keyword>
<keyword id="KW-0812">Transmembrane</keyword>
<keyword id="KW-1133">Transmembrane helix</keyword>
<sequence>MFPLISFSPTSLDFTFFAIIISGFVFIITRWNSNSKKRLNLPPGPPGWPVVGNLFQFARSGKPFFEYAEDLKKTYGPIFTLRMGTRTMIILSDATLVHEALIQRGALFASRPAENPTRTIFSCNKFTVNAAKYGPVWRSLRRNMVQNMLSSTRLKEFGKLRQSAMDKLIERIKSEARDNDGLIWVLKNARFAAFCILLEMCFGIEMDEETIEKMDEILKTVLMTVDPRIDDYLPILAPFFSKERKRALEVRREQVDYVVGVIERRRRAIQNPGSDKTASSFSYLDTLFDLKIEGRKTTPSNEELVTLCSEFLNGGTDTTGTAIEWGIAQLIANPEIQSRLYDEIKSTVGDDRRVDEKDVDKMVFLQAFVKELLRKHPPTYFSLTHAVMETTTLAGYDIPAGVNVEVYLPGISEDPRIWNNPKKFDPDRFMLGKEDADITGISGVKMIPFGVGRRICPGLAMATIHVHLMLARMVQEFEWCAHPPGSEIDFAGKLEFTVVMKNPLRAMVKPRI</sequence>
<evidence type="ECO:0000250" key="1"/>
<evidence type="ECO:0000255" key="2"/>
<evidence type="ECO:0000269" key="3">
    <source>
    </source>
</evidence>
<evidence type="ECO:0000305" key="4"/>
<protein>
    <recommendedName>
        <fullName>Cytochrome P450 77A4</fullName>
        <ecNumber>1.14.-.-</ecNumber>
    </recommendedName>
    <alternativeName>
        <fullName>Fatty acid epoxidase</fullName>
    </alternativeName>
</protein>
<organism>
    <name type="scientific">Arabidopsis thaliana</name>
    <name type="common">Mouse-ear cress</name>
    <dbReference type="NCBI Taxonomy" id="3702"/>
    <lineage>
        <taxon>Eukaryota</taxon>
        <taxon>Viridiplantae</taxon>
        <taxon>Streptophyta</taxon>
        <taxon>Embryophyta</taxon>
        <taxon>Tracheophyta</taxon>
        <taxon>Spermatophyta</taxon>
        <taxon>Magnoliopsida</taxon>
        <taxon>eudicotyledons</taxon>
        <taxon>Gunneridae</taxon>
        <taxon>Pentapetalae</taxon>
        <taxon>rosids</taxon>
        <taxon>malvids</taxon>
        <taxon>Brassicales</taxon>
        <taxon>Brassicaceae</taxon>
        <taxon>Camelineae</taxon>
        <taxon>Arabidopsis</taxon>
    </lineage>
</organism>
<gene>
    <name type="primary">CYP77A4</name>
    <name type="ordered locus">At5g04660</name>
    <name type="ORF">T1E3.20</name>
</gene>